<dbReference type="EMBL" id="AF494226">
    <property type="protein sequence ID" value="AAM19317.1"/>
    <property type="molecule type" value="Genomic_DNA"/>
</dbReference>
<dbReference type="SMR" id="P59539"/>
<dbReference type="FunCoup" id="P59539">
    <property type="interactions" value="721"/>
</dbReference>
<dbReference type="ChEMBL" id="CHEMBL4523252"/>
<dbReference type="DrugCentral" id="P59539"/>
<dbReference type="GlyCosmos" id="P59539">
    <property type="glycosylation" value="1 site, No reported glycans"/>
</dbReference>
<dbReference type="GlyGen" id="P59539">
    <property type="glycosylation" value="1 site"/>
</dbReference>
<dbReference type="iPTMnet" id="P59539"/>
<dbReference type="PhosphoSitePlus" id="P59539"/>
<dbReference type="BioMuta" id="HGNC:18876"/>
<dbReference type="DMDM" id="29839477"/>
<dbReference type="MassIVE" id="P59539"/>
<dbReference type="AGR" id="HGNC:18876"/>
<dbReference type="GeneCards" id="TAS2R45"/>
<dbReference type="HGNC" id="HGNC:18876">
    <property type="gene designation" value="TAS2R45"/>
</dbReference>
<dbReference type="MIM" id="613967">
    <property type="type" value="gene"/>
</dbReference>
<dbReference type="neXtProt" id="NX_P59539"/>
<dbReference type="PharmGKB" id="PA38730"/>
<dbReference type="InParanoid" id="P59539"/>
<dbReference type="PAN-GO" id="P59539">
    <property type="GO annotations" value="1 GO annotation based on evolutionary models"/>
</dbReference>
<dbReference type="PhylomeDB" id="P59539"/>
<dbReference type="PathwayCommons" id="P59539"/>
<dbReference type="Reactome" id="R-HSA-418594">
    <property type="pathway name" value="G alpha (i) signalling events"/>
</dbReference>
<dbReference type="Reactome" id="R-HSA-420499">
    <property type="pathway name" value="Class C/3 (Metabotropic glutamate/pheromone receptors)"/>
</dbReference>
<dbReference type="Pharos" id="P59539">
    <property type="development level" value="Tchem"/>
</dbReference>
<dbReference type="PRO" id="PR:P59539"/>
<dbReference type="Proteomes" id="UP000005640">
    <property type="component" value="Unplaced"/>
</dbReference>
<dbReference type="RNAct" id="P59539">
    <property type="molecule type" value="protein"/>
</dbReference>
<dbReference type="GO" id="GO:0016020">
    <property type="term" value="C:membrane"/>
    <property type="evidence" value="ECO:0000314"/>
    <property type="project" value="UniProtKB"/>
</dbReference>
<dbReference type="GO" id="GO:0005886">
    <property type="term" value="C:plasma membrane"/>
    <property type="evidence" value="ECO:0000304"/>
    <property type="project" value="Reactome"/>
</dbReference>
<dbReference type="GO" id="GO:0004930">
    <property type="term" value="F:G protein-coupled receptor activity"/>
    <property type="evidence" value="ECO:0007669"/>
    <property type="project" value="UniProtKB-KW"/>
</dbReference>
<dbReference type="GO" id="GO:0050909">
    <property type="term" value="P:sensory perception of taste"/>
    <property type="evidence" value="ECO:0007669"/>
    <property type="project" value="UniProtKB-KW"/>
</dbReference>
<dbReference type="CDD" id="cd15027">
    <property type="entry name" value="7tm_TAS2R43-like"/>
    <property type="match status" value="1"/>
</dbReference>
<dbReference type="FunFam" id="1.20.1070.10:FF:000042">
    <property type="entry name" value="Taste receptor type 2 member 7"/>
    <property type="match status" value="1"/>
</dbReference>
<dbReference type="Gene3D" id="1.20.1070.10">
    <property type="entry name" value="Rhodopsin 7-helix transmembrane proteins"/>
    <property type="match status" value="1"/>
</dbReference>
<dbReference type="InterPro" id="IPR007960">
    <property type="entry name" value="TAS2R"/>
</dbReference>
<dbReference type="PANTHER" id="PTHR11394">
    <property type="entry name" value="TASTE RECEPTOR TYPE 2"/>
    <property type="match status" value="1"/>
</dbReference>
<dbReference type="PANTHER" id="PTHR11394:SF134">
    <property type="entry name" value="TASTE RECEPTOR TYPE 2 MEMBER 45"/>
    <property type="match status" value="1"/>
</dbReference>
<dbReference type="Pfam" id="PF05296">
    <property type="entry name" value="TAS2R"/>
    <property type="match status" value="1"/>
</dbReference>
<dbReference type="SUPFAM" id="SSF81321">
    <property type="entry name" value="Family A G protein-coupled receptor-like"/>
    <property type="match status" value="1"/>
</dbReference>
<proteinExistence type="evidence at transcript level"/>
<reference key="1">
    <citation type="journal article" date="2002" name="Nat. Genet.">
        <title>The human TAS2R16 receptor mediates bitter taste in response to beta-glucopyranosides.</title>
        <authorList>
            <person name="Bufe B."/>
            <person name="Hofmann T."/>
            <person name="Krautwurst D."/>
            <person name="Raguse J.-D."/>
            <person name="Meyerhof W."/>
        </authorList>
    </citation>
    <scope>NUCLEOTIDE SEQUENCE [GENOMIC DNA]</scope>
</reference>
<reference key="2">
    <citation type="journal article" date="2002" name="Curr. Opin. Neurobiol.">
        <title>Receptors for bitter and sweet taste.</title>
        <authorList>
            <person name="Montmayeur J.-P."/>
            <person name="Matsunami H."/>
        </authorList>
    </citation>
    <scope>REVIEW</scope>
</reference>
<reference key="3">
    <citation type="journal article" date="2002" name="J. Biol. Chem.">
        <title>Molecular mechanisms of bitter and sweet taste transduction.</title>
        <authorList>
            <person name="Margolskee R.F."/>
        </authorList>
    </citation>
    <scope>REVIEW</scope>
</reference>
<reference key="4">
    <citation type="journal article" date="2003" name="Cell">
        <title>Coding of sweet, bitter, and umami tastes: different receptor cells sharing similar signaling pathways.</title>
        <authorList>
            <person name="Zhang Y."/>
            <person name="Hoon M.A."/>
            <person name="Chandrashekar J."/>
            <person name="Mueller K.L."/>
            <person name="Cook B."/>
            <person name="Wu D."/>
            <person name="Zuker C.S."/>
            <person name="Ryba N.J."/>
        </authorList>
    </citation>
    <scope>REVIEW</scope>
</reference>
<gene>
    <name type="primary">TAS2R45</name>
    <name type="synonym">GPR59</name>
</gene>
<evidence type="ECO:0000250" key="1"/>
<evidence type="ECO:0000255" key="2"/>
<evidence type="ECO:0000305" key="3"/>
<sequence length="299" mass="34278">MITFLPIIFSILVVVTFVIGNFANGFIALVNSTEWVKRQKISFADQIVTALAVSRVGLLWVLLLNWYSTVLNPAFCSVELRTTAYNIWAVTGHFSNWPATSLSIFYLLKIANFSNLIFLRLKRRVKSVILVVLLGPLLFLACHLFVVNMNQIVWTKEYEGNMTWKIKLRRAMYLSDTTVTMLANLVPFTVTLISFLLLVCSLCKHLKKMQLHGKGSQDPSTKVHIKVLQTVISFFLLRAIYFVSVIISVWSFKNLENKPVFMFCQAIGFSCSSAHPFILIWGNKKLKQTYLSVLWQMRY</sequence>
<keyword id="KW-0297">G-protein coupled receptor</keyword>
<keyword id="KW-0325">Glycoprotein</keyword>
<keyword id="KW-0472">Membrane</keyword>
<keyword id="KW-0675">Receptor</keyword>
<keyword id="KW-1185">Reference proteome</keyword>
<keyword id="KW-0716">Sensory transduction</keyword>
<keyword id="KW-0919">Taste</keyword>
<keyword id="KW-0807">Transducer</keyword>
<keyword id="KW-0812">Transmembrane</keyword>
<keyword id="KW-1133">Transmembrane helix</keyword>
<feature type="chain" id="PRO_0000082315" description="Taste receptor type 2 member 45">
    <location>
        <begin position="1"/>
        <end position="299"/>
    </location>
</feature>
<feature type="topological domain" description="Extracellular" evidence="2">
    <location>
        <position position="1"/>
    </location>
</feature>
<feature type="transmembrane region" description="Helical; Name=1" evidence="2">
    <location>
        <begin position="2"/>
        <end position="22"/>
    </location>
</feature>
<feature type="topological domain" description="Cytoplasmic" evidence="2">
    <location>
        <begin position="23"/>
        <end position="55"/>
    </location>
</feature>
<feature type="transmembrane region" description="Helical; Name=2" evidence="2">
    <location>
        <begin position="56"/>
        <end position="76"/>
    </location>
</feature>
<feature type="topological domain" description="Extracellular" evidence="2">
    <location>
        <begin position="77"/>
        <end position="98"/>
    </location>
</feature>
<feature type="transmembrane region" description="Helical; Name=3" evidence="2">
    <location>
        <begin position="99"/>
        <end position="119"/>
    </location>
</feature>
<feature type="topological domain" description="Cytoplasmic" evidence="2">
    <location>
        <begin position="120"/>
        <end position="126"/>
    </location>
</feature>
<feature type="transmembrane region" description="Helical; Name=4" evidence="2">
    <location>
        <begin position="127"/>
        <end position="147"/>
    </location>
</feature>
<feature type="topological domain" description="Extracellular" evidence="2">
    <location>
        <begin position="148"/>
        <end position="178"/>
    </location>
</feature>
<feature type="transmembrane region" description="Helical; Name=5" evidence="2">
    <location>
        <begin position="179"/>
        <end position="199"/>
    </location>
</feature>
<feature type="topological domain" description="Cytoplasmic" evidence="2">
    <location>
        <begin position="200"/>
        <end position="229"/>
    </location>
</feature>
<feature type="transmembrane region" description="Helical; Name=6" evidence="2">
    <location>
        <begin position="230"/>
        <end position="250"/>
    </location>
</feature>
<feature type="topological domain" description="Extracellular" evidence="2">
    <location>
        <begin position="251"/>
        <end position="259"/>
    </location>
</feature>
<feature type="transmembrane region" description="Helical; Name=7" evidence="2">
    <location>
        <begin position="260"/>
        <end position="280"/>
    </location>
</feature>
<feature type="topological domain" description="Cytoplasmic" evidence="2">
    <location>
        <begin position="281"/>
        <end position="299"/>
    </location>
</feature>
<feature type="glycosylation site" description="N-linked (GlcNAc...) asparagine" evidence="2">
    <location>
        <position position="161"/>
    </location>
</feature>
<organism>
    <name type="scientific">Homo sapiens</name>
    <name type="common">Human</name>
    <dbReference type="NCBI Taxonomy" id="9606"/>
    <lineage>
        <taxon>Eukaryota</taxon>
        <taxon>Metazoa</taxon>
        <taxon>Chordata</taxon>
        <taxon>Craniata</taxon>
        <taxon>Vertebrata</taxon>
        <taxon>Euteleostomi</taxon>
        <taxon>Mammalia</taxon>
        <taxon>Eutheria</taxon>
        <taxon>Euarchontoglires</taxon>
        <taxon>Primates</taxon>
        <taxon>Haplorrhini</taxon>
        <taxon>Catarrhini</taxon>
        <taxon>Hominidae</taxon>
        <taxon>Homo</taxon>
    </lineage>
</organism>
<name>T2R45_HUMAN</name>
<accession>P59539</accession>
<protein>
    <recommendedName>
        <fullName>Taste receptor type 2 member 45</fullName>
        <shortName>T2R45</shortName>
    </recommendedName>
    <alternativeName>
        <fullName>G-protein coupled receptor 59</fullName>
    </alternativeName>
</protein>
<comment type="function">
    <text evidence="1">Receptor that may play a role in the perception of bitterness and is gustducin-linked. May play a role in sensing the chemical composition of the gastrointestinal content. The activity of this receptor may stimulate alpha gustducin, mediate PLC-beta-2 activation and lead to the gating of TRPM5 (By similarity).</text>
</comment>
<comment type="subcellular location">
    <subcellularLocation>
        <location>Membrane</location>
        <topology>Multi-pass membrane protein</topology>
    </subcellularLocation>
</comment>
<comment type="tissue specificity">
    <text>Expressed in subsets of taste receptor cells of the tongue and exclusively in gustducin-positive cells.</text>
</comment>
<comment type="miscellaneous">
    <text>Most taste cells may be activated by a limited number of bitter compounds; individual taste cells can discriminate among bitter stimuli.</text>
</comment>
<comment type="similarity">
    <text evidence="3">Belongs to the G-protein coupled receptor T2R family.</text>
</comment>